<organism>
    <name type="scientific">Mycoplasma genitalium (strain ATCC 33530 / DSM 19775 / NCTC 10195 / G37)</name>
    <name type="common">Mycoplasmoides genitalium</name>
    <dbReference type="NCBI Taxonomy" id="243273"/>
    <lineage>
        <taxon>Bacteria</taxon>
        <taxon>Bacillati</taxon>
        <taxon>Mycoplasmatota</taxon>
        <taxon>Mycoplasmoidales</taxon>
        <taxon>Mycoplasmoidaceae</taxon>
        <taxon>Mycoplasmoides</taxon>
    </lineage>
</organism>
<gene>
    <name type="ordered locus">MG002</name>
</gene>
<keyword id="KW-0143">Chaperone</keyword>
<keyword id="KW-1185">Reference proteome</keyword>
<reference key="1">
    <citation type="journal article" date="1994" name="J. Bacteriol.">
        <title>An unusual gene containing a dnaJ N-terminal box flanks the putative origin of replication of Mycoplasma genitalium.</title>
        <authorList>
            <person name="Bailey C.C."/>
            <person name="Bott K.F."/>
        </authorList>
    </citation>
    <scope>NUCLEOTIDE SEQUENCE [GENOMIC DNA]</scope>
    <source>
        <strain>ATCC 33530 / DSM 19775 / NCTC 10195 / G37</strain>
    </source>
</reference>
<reference key="2">
    <citation type="journal article" date="1995" name="Science">
        <title>The minimal gene complement of Mycoplasma genitalium.</title>
        <authorList>
            <person name="Fraser C.M."/>
            <person name="Gocayne J.D."/>
            <person name="White O."/>
            <person name="Adams M.D."/>
            <person name="Clayton R.A."/>
            <person name="Fleischmann R.D."/>
            <person name="Bult C.J."/>
            <person name="Kerlavage A.R."/>
            <person name="Sutton G.G."/>
            <person name="Kelley J.M."/>
            <person name="Fritchman J.L."/>
            <person name="Weidman J.F."/>
            <person name="Small K.V."/>
            <person name="Sandusky M."/>
            <person name="Fuhrmann J.L."/>
            <person name="Nguyen D.T."/>
            <person name="Utterback T.R."/>
            <person name="Saudek D.M."/>
            <person name="Phillips C.A."/>
            <person name="Merrick J.M."/>
            <person name="Tomb J.-F."/>
            <person name="Dougherty B.A."/>
            <person name="Bott K.F."/>
            <person name="Hu P.-C."/>
            <person name="Lucier T.S."/>
            <person name="Peterson S.N."/>
            <person name="Smith H.O."/>
            <person name="Hutchison C.A. III"/>
            <person name="Venter J.C."/>
        </authorList>
    </citation>
    <scope>NUCLEOTIDE SEQUENCE [LARGE SCALE GENOMIC DNA]</scope>
    <source>
        <strain>ATCC 33530 / DSM 19775 / NCTC 10195 / G37</strain>
    </source>
</reference>
<reference key="3">
    <citation type="journal article" date="2006" name="Proc. Natl. Acad. Sci. U.S.A.">
        <title>Essential genes of a minimal bacterium.</title>
        <authorList>
            <person name="Glass J.I."/>
            <person name="Assad-Garcia N."/>
            <person name="Alperovich N."/>
            <person name="Yooseph S."/>
            <person name="Lewis M.R."/>
            <person name="Maruf M."/>
            <person name="Hutchison C.A. III"/>
            <person name="Smith H.O."/>
            <person name="Venter J.C."/>
        </authorList>
    </citation>
    <scope>SEQUENCE REVISION TO 95</scope>
    <scope>DISRUPTION PHENOTYPE</scope>
    <source>
        <strain>ATCC 33530 / DSM 19775 / NCTC 10195 / G37</strain>
    </source>
</reference>
<comment type="disruption phenotype">
    <text evidence="2">Not essential, it can be deleted.</text>
</comment>
<evidence type="ECO:0000255" key="1">
    <source>
        <dbReference type="PROSITE-ProRule" id="PRU00286"/>
    </source>
</evidence>
<evidence type="ECO:0000269" key="2">
    <source>
    </source>
</evidence>
<protein>
    <recommendedName>
        <fullName>DnaJ-like protein MG002</fullName>
    </recommendedName>
</protein>
<feature type="chain" id="PRO_0000071000" description="DnaJ-like protein MG002">
    <location>
        <begin position="1"/>
        <end position="310"/>
    </location>
</feature>
<feature type="domain" description="J" evidence="1">
    <location>
        <begin position="1"/>
        <end position="66"/>
    </location>
</feature>
<accession>P47248</accession>
<proteinExistence type="predicted"/>
<sequence>MNLYDLLELPTTASIKEIKIAYKRLAKRYHPDVNKLGSQTFVEINNAYSILSDPNQKEKYDSMLKVNDFQNRIKNLDISVRWHENFMEELELRKNWEFDFFSSDEDFFYSPFTKNKYASFLDKDVSLAFFQLYSKGKIDHQLEKSLLKRRDVKEACQQNKNFIEVIKEQYNYFGWIEAKRYFNINVELELTQREIRDRDVVNLPLKIKVINNDFPNQLWYEIYKNYSFRLSWDIKNGEIAEFFNKGNRALGWKGDLIVRMKVVNKVNKRLRIFSSFFENDKSKLWFLVPNDKQSNPNKGVFNYKTQHFID</sequence>
<name>DNAJL_MYCGE</name>
<dbReference type="EMBL" id="U09251">
    <property type="protein sequence ID" value="AAA57070.1"/>
    <property type="molecule type" value="Genomic_DNA"/>
</dbReference>
<dbReference type="EMBL" id="L43967">
    <property type="protein sequence ID" value="AAC71218.2"/>
    <property type="molecule type" value="Genomic_DNA"/>
</dbReference>
<dbReference type="PIR" id="B64200">
    <property type="entry name" value="B64200"/>
</dbReference>
<dbReference type="RefSeq" id="WP_009885561.1">
    <property type="nucleotide sequence ID" value="NC_000908.2"/>
</dbReference>
<dbReference type="STRING" id="243273.MG_002"/>
<dbReference type="GeneID" id="88282117"/>
<dbReference type="KEGG" id="mge:MG_002"/>
<dbReference type="eggNOG" id="COG0484">
    <property type="taxonomic scope" value="Bacteria"/>
</dbReference>
<dbReference type="HOGENOM" id="CLU_896645_0_0_14"/>
<dbReference type="InParanoid" id="P47248"/>
<dbReference type="OrthoDB" id="9779889at2"/>
<dbReference type="BioCyc" id="MGEN243273:G1GJ2-2-MONOMER"/>
<dbReference type="Proteomes" id="UP000000807">
    <property type="component" value="Chromosome"/>
</dbReference>
<dbReference type="GO" id="GO:0051787">
    <property type="term" value="F:misfolded protein binding"/>
    <property type="evidence" value="ECO:0000318"/>
    <property type="project" value="GO_Central"/>
</dbReference>
<dbReference type="GO" id="GO:0051087">
    <property type="term" value="F:protein-folding chaperone binding"/>
    <property type="evidence" value="ECO:0000318"/>
    <property type="project" value="GO_Central"/>
</dbReference>
<dbReference type="CDD" id="cd06257">
    <property type="entry name" value="DnaJ"/>
    <property type="match status" value="1"/>
</dbReference>
<dbReference type="Gene3D" id="1.10.287.110">
    <property type="entry name" value="DnaJ domain"/>
    <property type="match status" value="1"/>
</dbReference>
<dbReference type="InterPro" id="IPR001623">
    <property type="entry name" value="DnaJ_domain"/>
</dbReference>
<dbReference type="InterPro" id="IPR018253">
    <property type="entry name" value="DnaJ_domain_CS"/>
</dbReference>
<dbReference type="InterPro" id="IPR051948">
    <property type="entry name" value="Hsp70_co-chaperone_J-domain"/>
</dbReference>
<dbReference type="InterPro" id="IPR036869">
    <property type="entry name" value="J_dom_sf"/>
</dbReference>
<dbReference type="PANTHER" id="PTHR44360">
    <property type="entry name" value="DNAJ HOMOLOG SUBFAMILY B MEMBER 9"/>
    <property type="match status" value="1"/>
</dbReference>
<dbReference type="PANTHER" id="PTHR44360:SF1">
    <property type="entry name" value="DNAJ HOMOLOG SUBFAMILY B MEMBER 9"/>
    <property type="match status" value="1"/>
</dbReference>
<dbReference type="Pfam" id="PF00226">
    <property type="entry name" value="DnaJ"/>
    <property type="match status" value="1"/>
</dbReference>
<dbReference type="PRINTS" id="PR00625">
    <property type="entry name" value="JDOMAIN"/>
</dbReference>
<dbReference type="SMART" id="SM00271">
    <property type="entry name" value="DnaJ"/>
    <property type="match status" value="1"/>
</dbReference>
<dbReference type="SUPFAM" id="SSF46565">
    <property type="entry name" value="Chaperone J-domain"/>
    <property type="match status" value="1"/>
</dbReference>
<dbReference type="PROSITE" id="PS00636">
    <property type="entry name" value="DNAJ_1"/>
    <property type="match status" value="1"/>
</dbReference>
<dbReference type="PROSITE" id="PS50076">
    <property type="entry name" value="DNAJ_2"/>
    <property type="match status" value="1"/>
</dbReference>